<evidence type="ECO:0000255" key="1">
    <source>
        <dbReference type="HAMAP-Rule" id="MF_00607"/>
    </source>
</evidence>
<reference key="1">
    <citation type="submission" date="2008-10" db="EMBL/GenBank/DDBJ databases">
        <title>Genome sequence of Bacillus anthracis str. CDC 684.</title>
        <authorList>
            <person name="Dodson R.J."/>
            <person name="Munk A.C."/>
            <person name="Brettin T."/>
            <person name="Bruce D."/>
            <person name="Detter C."/>
            <person name="Tapia R."/>
            <person name="Han C."/>
            <person name="Sutton G."/>
            <person name="Sims D."/>
        </authorList>
    </citation>
    <scope>NUCLEOTIDE SEQUENCE [LARGE SCALE GENOMIC DNA]</scope>
    <source>
        <strain>CDC 684 / NRRL 3495</strain>
    </source>
</reference>
<dbReference type="EC" id="2.1.1.182" evidence="1"/>
<dbReference type="EMBL" id="CP001215">
    <property type="protein sequence ID" value="ACP16285.1"/>
    <property type="molecule type" value="Genomic_DNA"/>
</dbReference>
<dbReference type="RefSeq" id="WP_000651552.1">
    <property type="nucleotide sequence ID" value="NC_012581.1"/>
</dbReference>
<dbReference type="SMR" id="C3LJ13"/>
<dbReference type="GeneID" id="75083305"/>
<dbReference type="KEGG" id="bah:BAMEG_0050"/>
<dbReference type="HOGENOM" id="CLU_041220_0_0_9"/>
<dbReference type="GO" id="GO:0005829">
    <property type="term" value="C:cytosol"/>
    <property type="evidence" value="ECO:0007669"/>
    <property type="project" value="TreeGrafter"/>
</dbReference>
<dbReference type="GO" id="GO:0052908">
    <property type="term" value="F:16S rRNA (adenine(1518)-N(6)/adenine(1519)-N(6))-dimethyltransferase activity"/>
    <property type="evidence" value="ECO:0007669"/>
    <property type="project" value="UniProtKB-EC"/>
</dbReference>
<dbReference type="GO" id="GO:0003723">
    <property type="term" value="F:RNA binding"/>
    <property type="evidence" value="ECO:0007669"/>
    <property type="project" value="UniProtKB-KW"/>
</dbReference>
<dbReference type="CDD" id="cd02440">
    <property type="entry name" value="AdoMet_MTases"/>
    <property type="match status" value="1"/>
</dbReference>
<dbReference type="FunFam" id="1.10.8.100:FF:000002">
    <property type="entry name" value="Ribosomal RNA small subunit methyltransferase A"/>
    <property type="match status" value="1"/>
</dbReference>
<dbReference type="FunFam" id="3.40.50.150:FF:000023">
    <property type="entry name" value="Ribosomal RNA small subunit methyltransferase A"/>
    <property type="match status" value="1"/>
</dbReference>
<dbReference type="Gene3D" id="1.10.8.100">
    <property type="entry name" value="Ribosomal RNA adenine dimethylase-like, domain 2"/>
    <property type="match status" value="1"/>
</dbReference>
<dbReference type="Gene3D" id="3.40.50.150">
    <property type="entry name" value="Vaccinia Virus protein VP39"/>
    <property type="match status" value="1"/>
</dbReference>
<dbReference type="HAMAP" id="MF_00607">
    <property type="entry name" value="16SrRNA_methyltr_A"/>
    <property type="match status" value="1"/>
</dbReference>
<dbReference type="InterPro" id="IPR001737">
    <property type="entry name" value="KsgA/Erm"/>
</dbReference>
<dbReference type="InterPro" id="IPR023165">
    <property type="entry name" value="rRNA_Ade_diMease-like_C"/>
</dbReference>
<dbReference type="InterPro" id="IPR020596">
    <property type="entry name" value="rRNA_Ade_Mease_Trfase_CS"/>
</dbReference>
<dbReference type="InterPro" id="IPR020598">
    <property type="entry name" value="rRNA_Ade_methylase_Trfase_N"/>
</dbReference>
<dbReference type="InterPro" id="IPR011530">
    <property type="entry name" value="rRNA_adenine_dimethylase"/>
</dbReference>
<dbReference type="InterPro" id="IPR029063">
    <property type="entry name" value="SAM-dependent_MTases_sf"/>
</dbReference>
<dbReference type="NCBIfam" id="TIGR00755">
    <property type="entry name" value="ksgA"/>
    <property type="match status" value="1"/>
</dbReference>
<dbReference type="PANTHER" id="PTHR11727">
    <property type="entry name" value="DIMETHYLADENOSINE TRANSFERASE"/>
    <property type="match status" value="1"/>
</dbReference>
<dbReference type="PANTHER" id="PTHR11727:SF7">
    <property type="entry name" value="DIMETHYLADENOSINE TRANSFERASE-RELATED"/>
    <property type="match status" value="1"/>
</dbReference>
<dbReference type="Pfam" id="PF00398">
    <property type="entry name" value="RrnaAD"/>
    <property type="match status" value="1"/>
</dbReference>
<dbReference type="SMART" id="SM00650">
    <property type="entry name" value="rADc"/>
    <property type="match status" value="1"/>
</dbReference>
<dbReference type="SUPFAM" id="SSF53335">
    <property type="entry name" value="S-adenosyl-L-methionine-dependent methyltransferases"/>
    <property type="match status" value="1"/>
</dbReference>
<dbReference type="PROSITE" id="PS01131">
    <property type="entry name" value="RRNA_A_DIMETH"/>
    <property type="match status" value="1"/>
</dbReference>
<dbReference type="PROSITE" id="PS51689">
    <property type="entry name" value="SAM_RNA_A_N6_MT"/>
    <property type="match status" value="1"/>
</dbReference>
<comment type="function">
    <text evidence="1">Specifically dimethylates two adjacent adenosines (A1518 and A1519) in the loop of a conserved hairpin near the 3'-end of 16S rRNA in the 30S particle. May play a critical role in biogenesis of 30S subunits.</text>
</comment>
<comment type="catalytic activity">
    <reaction evidence="1">
        <text>adenosine(1518)/adenosine(1519) in 16S rRNA + 4 S-adenosyl-L-methionine = N(6)-dimethyladenosine(1518)/N(6)-dimethyladenosine(1519) in 16S rRNA + 4 S-adenosyl-L-homocysteine + 4 H(+)</text>
        <dbReference type="Rhea" id="RHEA:19609"/>
        <dbReference type="Rhea" id="RHEA-COMP:10232"/>
        <dbReference type="Rhea" id="RHEA-COMP:10233"/>
        <dbReference type="ChEBI" id="CHEBI:15378"/>
        <dbReference type="ChEBI" id="CHEBI:57856"/>
        <dbReference type="ChEBI" id="CHEBI:59789"/>
        <dbReference type="ChEBI" id="CHEBI:74411"/>
        <dbReference type="ChEBI" id="CHEBI:74493"/>
        <dbReference type="EC" id="2.1.1.182"/>
    </reaction>
</comment>
<comment type="subcellular location">
    <subcellularLocation>
        <location evidence="1">Cytoplasm</location>
    </subcellularLocation>
</comment>
<comment type="similarity">
    <text evidence="1">Belongs to the class I-like SAM-binding methyltransferase superfamily. rRNA adenine N(6)-methyltransferase family. RsmA subfamily.</text>
</comment>
<feature type="chain" id="PRO_1000147123" description="Ribosomal RNA small subunit methyltransferase A">
    <location>
        <begin position="1"/>
        <end position="292"/>
    </location>
</feature>
<feature type="binding site" evidence="1">
    <location>
        <position position="28"/>
    </location>
    <ligand>
        <name>S-adenosyl-L-methionine</name>
        <dbReference type="ChEBI" id="CHEBI:59789"/>
    </ligand>
</feature>
<feature type="binding site" evidence="1">
    <location>
        <position position="30"/>
    </location>
    <ligand>
        <name>S-adenosyl-L-methionine</name>
        <dbReference type="ChEBI" id="CHEBI:59789"/>
    </ligand>
</feature>
<feature type="binding site" evidence="1">
    <location>
        <position position="55"/>
    </location>
    <ligand>
        <name>S-adenosyl-L-methionine</name>
        <dbReference type="ChEBI" id="CHEBI:59789"/>
    </ligand>
</feature>
<feature type="binding site" evidence="1">
    <location>
        <position position="76"/>
    </location>
    <ligand>
        <name>S-adenosyl-L-methionine</name>
        <dbReference type="ChEBI" id="CHEBI:59789"/>
    </ligand>
</feature>
<feature type="binding site" evidence="1">
    <location>
        <position position="101"/>
    </location>
    <ligand>
        <name>S-adenosyl-L-methionine</name>
        <dbReference type="ChEBI" id="CHEBI:59789"/>
    </ligand>
</feature>
<feature type="binding site" evidence="1">
    <location>
        <position position="126"/>
    </location>
    <ligand>
        <name>S-adenosyl-L-methionine</name>
        <dbReference type="ChEBI" id="CHEBI:59789"/>
    </ligand>
</feature>
<name>RSMA_BACAC</name>
<sequence length="292" mass="32768">MKDIATPNRTKDIVEKYGFSFKKSLGQNFLIDTNVLNRIVDHAEIGSESGAIEIGPGIGALTEQLAKRAKKVVAFEIDQRLLPILDETLAPYGNVTVINKDVLKADVHEVFSEQFEEGQDVMVVANLPYYITTPILFKLLEEKLPVRGFVVMMQKEVGDRLAAKPGTKEYGSLSIAIQYYTEVETVMTVPRTVFVPQPNVDSAIIRLLKRPKPVVEVTDETFFFEVVRASFAQRRKTLMNNLSNNLNGFPKDKELLDRILTEVGIDPKRRGETLSIEEFATLSNALVLHKLS</sequence>
<accession>C3LJ13</accession>
<proteinExistence type="inferred from homology"/>
<organism>
    <name type="scientific">Bacillus anthracis (strain CDC 684 / NRRL 3495)</name>
    <dbReference type="NCBI Taxonomy" id="568206"/>
    <lineage>
        <taxon>Bacteria</taxon>
        <taxon>Bacillati</taxon>
        <taxon>Bacillota</taxon>
        <taxon>Bacilli</taxon>
        <taxon>Bacillales</taxon>
        <taxon>Bacillaceae</taxon>
        <taxon>Bacillus</taxon>
        <taxon>Bacillus cereus group</taxon>
    </lineage>
</organism>
<gene>
    <name evidence="1" type="primary">rsmA</name>
    <name evidence="1" type="synonym">ksgA</name>
    <name type="ordered locus">BAMEG_0050</name>
</gene>
<protein>
    <recommendedName>
        <fullName evidence="1">Ribosomal RNA small subunit methyltransferase A</fullName>
        <ecNumber evidence="1">2.1.1.182</ecNumber>
    </recommendedName>
    <alternativeName>
        <fullName evidence="1">16S rRNA (adenine(1518)-N(6)/adenine(1519)-N(6))-dimethyltransferase</fullName>
    </alternativeName>
    <alternativeName>
        <fullName evidence="1">16S rRNA dimethyladenosine transferase</fullName>
    </alternativeName>
    <alternativeName>
        <fullName evidence="1">16S rRNA dimethylase</fullName>
    </alternativeName>
    <alternativeName>
        <fullName evidence="1">S-adenosylmethionine-6-N', N'-adenosyl(rRNA) dimethyltransferase</fullName>
    </alternativeName>
</protein>
<keyword id="KW-0963">Cytoplasm</keyword>
<keyword id="KW-0489">Methyltransferase</keyword>
<keyword id="KW-0694">RNA-binding</keyword>
<keyword id="KW-0698">rRNA processing</keyword>
<keyword id="KW-0949">S-adenosyl-L-methionine</keyword>
<keyword id="KW-0808">Transferase</keyword>